<reference key="1">
    <citation type="journal article" date="2004" name="Nature">
        <title>Genome sequence of the Brown Norway rat yields insights into mammalian evolution.</title>
        <authorList>
            <person name="Gibbs R.A."/>
            <person name="Weinstock G.M."/>
            <person name="Metzker M.L."/>
            <person name="Muzny D.M."/>
            <person name="Sodergren E.J."/>
            <person name="Scherer S."/>
            <person name="Scott G."/>
            <person name="Steffen D."/>
            <person name="Worley K.C."/>
            <person name="Burch P.E."/>
            <person name="Okwuonu G."/>
            <person name="Hines S."/>
            <person name="Lewis L."/>
            <person name="Deramo C."/>
            <person name="Delgado O."/>
            <person name="Dugan-Rocha S."/>
            <person name="Miner G."/>
            <person name="Morgan M."/>
            <person name="Hawes A."/>
            <person name="Gill R."/>
            <person name="Holt R.A."/>
            <person name="Adams M.D."/>
            <person name="Amanatides P.G."/>
            <person name="Baden-Tillson H."/>
            <person name="Barnstead M."/>
            <person name="Chin S."/>
            <person name="Evans C.A."/>
            <person name="Ferriera S."/>
            <person name="Fosler C."/>
            <person name="Glodek A."/>
            <person name="Gu Z."/>
            <person name="Jennings D."/>
            <person name="Kraft C.L."/>
            <person name="Nguyen T."/>
            <person name="Pfannkoch C.M."/>
            <person name="Sitter C."/>
            <person name="Sutton G.G."/>
            <person name="Venter J.C."/>
            <person name="Woodage T."/>
            <person name="Smith D."/>
            <person name="Lee H.-M."/>
            <person name="Gustafson E."/>
            <person name="Cahill P."/>
            <person name="Kana A."/>
            <person name="Doucette-Stamm L."/>
            <person name="Weinstock K."/>
            <person name="Fechtel K."/>
            <person name="Weiss R.B."/>
            <person name="Dunn D.M."/>
            <person name="Green E.D."/>
            <person name="Blakesley R.W."/>
            <person name="Bouffard G.G."/>
            <person name="De Jong P.J."/>
            <person name="Osoegawa K."/>
            <person name="Zhu B."/>
            <person name="Marra M."/>
            <person name="Schein J."/>
            <person name="Bosdet I."/>
            <person name="Fjell C."/>
            <person name="Jones S."/>
            <person name="Krzywinski M."/>
            <person name="Mathewson C."/>
            <person name="Siddiqui A."/>
            <person name="Wye N."/>
            <person name="McPherson J."/>
            <person name="Zhao S."/>
            <person name="Fraser C.M."/>
            <person name="Shetty J."/>
            <person name="Shatsman S."/>
            <person name="Geer K."/>
            <person name="Chen Y."/>
            <person name="Abramzon S."/>
            <person name="Nierman W.C."/>
            <person name="Havlak P.H."/>
            <person name="Chen R."/>
            <person name="Durbin K.J."/>
            <person name="Egan A."/>
            <person name="Ren Y."/>
            <person name="Song X.-Z."/>
            <person name="Li B."/>
            <person name="Liu Y."/>
            <person name="Qin X."/>
            <person name="Cawley S."/>
            <person name="Cooney A.J."/>
            <person name="D'Souza L.M."/>
            <person name="Martin K."/>
            <person name="Wu J.Q."/>
            <person name="Gonzalez-Garay M.L."/>
            <person name="Jackson A.R."/>
            <person name="Kalafus K.J."/>
            <person name="McLeod M.P."/>
            <person name="Milosavljevic A."/>
            <person name="Virk D."/>
            <person name="Volkov A."/>
            <person name="Wheeler D.A."/>
            <person name="Zhang Z."/>
            <person name="Bailey J.A."/>
            <person name="Eichler E.E."/>
            <person name="Tuzun E."/>
            <person name="Birney E."/>
            <person name="Mongin E."/>
            <person name="Ureta-Vidal A."/>
            <person name="Woodwark C."/>
            <person name="Zdobnov E."/>
            <person name="Bork P."/>
            <person name="Suyama M."/>
            <person name="Torrents D."/>
            <person name="Alexandersson M."/>
            <person name="Trask B.J."/>
            <person name="Young J.M."/>
            <person name="Huang H."/>
            <person name="Wang H."/>
            <person name="Xing H."/>
            <person name="Daniels S."/>
            <person name="Gietzen D."/>
            <person name="Schmidt J."/>
            <person name="Stevens K."/>
            <person name="Vitt U."/>
            <person name="Wingrove J."/>
            <person name="Camara F."/>
            <person name="Mar Alba M."/>
            <person name="Abril J.F."/>
            <person name="Guigo R."/>
            <person name="Smit A."/>
            <person name="Dubchak I."/>
            <person name="Rubin E.M."/>
            <person name="Couronne O."/>
            <person name="Poliakov A."/>
            <person name="Huebner N."/>
            <person name="Ganten D."/>
            <person name="Goesele C."/>
            <person name="Hummel O."/>
            <person name="Kreitler T."/>
            <person name="Lee Y.-A."/>
            <person name="Monti J."/>
            <person name="Schulz H."/>
            <person name="Zimdahl H."/>
            <person name="Himmelbauer H."/>
            <person name="Lehrach H."/>
            <person name="Jacob H.J."/>
            <person name="Bromberg S."/>
            <person name="Gullings-Handley J."/>
            <person name="Jensen-Seaman M.I."/>
            <person name="Kwitek A.E."/>
            <person name="Lazar J."/>
            <person name="Pasko D."/>
            <person name="Tonellato P.J."/>
            <person name="Twigger S."/>
            <person name="Ponting C.P."/>
            <person name="Duarte J.M."/>
            <person name="Rice S."/>
            <person name="Goodstadt L."/>
            <person name="Beatson S.A."/>
            <person name="Emes R.D."/>
            <person name="Winter E.E."/>
            <person name="Webber C."/>
            <person name="Brandt P."/>
            <person name="Nyakatura G."/>
            <person name="Adetobi M."/>
            <person name="Chiaromonte F."/>
            <person name="Elnitski L."/>
            <person name="Eswara P."/>
            <person name="Hardison R.C."/>
            <person name="Hou M."/>
            <person name="Kolbe D."/>
            <person name="Makova K."/>
            <person name="Miller W."/>
            <person name="Nekrutenko A."/>
            <person name="Riemer C."/>
            <person name="Schwartz S."/>
            <person name="Taylor J."/>
            <person name="Yang S."/>
            <person name="Zhang Y."/>
            <person name="Lindpaintner K."/>
            <person name="Andrews T.D."/>
            <person name="Caccamo M."/>
            <person name="Clamp M."/>
            <person name="Clarke L."/>
            <person name="Curwen V."/>
            <person name="Durbin R.M."/>
            <person name="Eyras E."/>
            <person name="Searle S.M."/>
            <person name="Cooper G.M."/>
            <person name="Batzoglou S."/>
            <person name="Brudno M."/>
            <person name="Sidow A."/>
            <person name="Stone E.A."/>
            <person name="Payseur B.A."/>
            <person name="Bourque G."/>
            <person name="Lopez-Otin C."/>
            <person name="Puente X.S."/>
            <person name="Chakrabarti K."/>
            <person name="Chatterji S."/>
            <person name="Dewey C."/>
            <person name="Pachter L."/>
            <person name="Bray N."/>
            <person name="Yap V.B."/>
            <person name="Caspi A."/>
            <person name="Tesler G."/>
            <person name="Pevzner P.A."/>
            <person name="Haussler D."/>
            <person name="Roskin K.M."/>
            <person name="Baertsch R."/>
            <person name="Clawson H."/>
            <person name="Furey T.S."/>
            <person name="Hinrichs A.S."/>
            <person name="Karolchik D."/>
            <person name="Kent W.J."/>
            <person name="Rosenbloom K.R."/>
            <person name="Trumbower H."/>
            <person name="Weirauch M."/>
            <person name="Cooper D.N."/>
            <person name="Stenson P.D."/>
            <person name="Ma B."/>
            <person name="Brent M."/>
            <person name="Arumugam M."/>
            <person name="Shteynberg D."/>
            <person name="Copley R.R."/>
            <person name="Taylor M.S."/>
            <person name="Riethman H."/>
            <person name="Mudunuri U."/>
            <person name="Peterson J."/>
            <person name="Guyer M."/>
            <person name="Felsenfeld A."/>
            <person name="Old S."/>
            <person name="Mockrin S."/>
            <person name="Collins F.S."/>
        </authorList>
    </citation>
    <scope>NUCLEOTIDE SEQUENCE [LARGE SCALE GENOMIC DNA]</scope>
    <source>
        <strain>Brown Norway</strain>
    </source>
</reference>
<reference key="2">
    <citation type="journal article" date="2004" name="Genome Res.">
        <title>The status, quality, and expansion of the NIH full-length cDNA project: the Mammalian Gene Collection (MGC).</title>
        <authorList>
            <consortium name="The MGC Project Team"/>
        </authorList>
    </citation>
    <scope>NUCLEOTIDE SEQUENCE [LARGE SCALE MRNA] (ISOFORM 2)</scope>
    <source>
        <tissue>Pituitary</tissue>
    </source>
</reference>
<accession>Q6P3V7</accession>
<feature type="chain" id="PRO_0000342551" description="Tetratricopeptide repeat protein 41">
    <location>
        <begin position="1"/>
        <end position="1309"/>
    </location>
</feature>
<feature type="repeat" description="TPR 1">
    <location>
        <begin position="399"/>
        <end position="432"/>
    </location>
</feature>
<feature type="repeat" description="TPR 2">
    <location>
        <begin position="651"/>
        <end position="684"/>
    </location>
</feature>
<feature type="repeat" description="TPR 3">
    <location>
        <begin position="817"/>
        <end position="851"/>
    </location>
</feature>
<feature type="repeat" description="TPR 4">
    <location>
        <begin position="859"/>
        <end position="892"/>
    </location>
</feature>
<feature type="repeat" description="TPR 5">
    <location>
        <begin position="989"/>
        <end position="1024"/>
    </location>
</feature>
<feature type="repeat" description="TPR 6">
    <location>
        <begin position="1042"/>
        <end position="1079"/>
    </location>
</feature>
<feature type="splice variant" id="VSP_034502" description="In isoform 2." evidence="3">
    <original>P</original>
    <variation>T</variation>
    <location>
        <position position="399"/>
    </location>
</feature>
<feature type="splice variant" id="VSP_034503" description="In isoform 2." evidence="3">
    <location>
        <begin position="400"/>
        <end position="1309"/>
    </location>
</feature>
<feature type="sequence conflict" description="In Ref. 2; AAH63813." evidence="4" ref="2">
    <original>I</original>
    <variation>M</variation>
    <location>
        <position position="32"/>
    </location>
</feature>
<evidence type="ECO:0000250" key="1"/>
<evidence type="ECO:0000250" key="2">
    <source>
        <dbReference type="UniProtKB" id="Q692V3"/>
    </source>
</evidence>
<evidence type="ECO:0000303" key="3">
    <source>
    </source>
</evidence>
<evidence type="ECO:0000305" key="4"/>
<keyword id="KW-0025">Alternative splicing</keyword>
<keyword id="KW-0963">Cytoplasm</keyword>
<keyword id="KW-1185">Reference proteome</keyword>
<keyword id="KW-0677">Repeat</keyword>
<keyword id="KW-0802">TPR repeat</keyword>
<name>TTC41_RAT</name>
<organism>
    <name type="scientific">Rattus norvegicus</name>
    <name type="common">Rat</name>
    <dbReference type="NCBI Taxonomy" id="10116"/>
    <lineage>
        <taxon>Eukaryota</taxon>
        <taxon>Metazoa</taxon>
        <taxon>Chordata</taxon>
        <taxon>Craniata</taxon>
        <taxon>Vertebrata</taxon>
        <taxon>Euteleostomi</taxon>
        <taxon>Mammalia</taxon>
        <taxon>Eutheria</taxon>
        <taxon>Euarchontoglires</taxon>
        <taxon>Glires</taxon>
        <taxon>Rodentia</taxon>
        <taxon>Myomorpha</taxon>
        <taxon>Muroidea</taxon>
        <taxon>Muridae</taxon>
        <taxon>Murinae</taxon>
        <taxon>Rattus</taxon>
    </lineage>
</organism>
<dbReference type="EMBL" id="AABR03057641">
    <property type="status" value="NOT_ANNOTATED_CDS"/>
    <property type="molecule type" value="Genomic_DNA"/>
</dbReference>
<dbReference type="EMBL" id="AABR03059265">
    <property type="status" value="NOT_ANNOTATED_CDS"/>
    <property type="molecule type" value="Genomic_DNA"/>
</dbReference>
<dbReference type="EMBL" id="AABR03060536">
    <property type="status" value="NOT_ANNOTATED_CDS"/>
    <property type="molecule type" value="Genomic_DNA"/>
</dbReference>
<dbReference type="EMBL" id="AABR03060891">
    <property type="status" value="NOT_ANNOTATED_CDS"/>
    <property type="molecule type" value="Genomic_DNA"/>
</dbReference>
<dbReference type="EMBL" id="AABR03061268">
    <property type="status" value="NOT_ANNOTATED_CDS"/>
    <property type="molecule type" value="Genomic_DNA"/>
</dbReference>
<dbReference type="EMBL" id="AABR03061651">
    <property type="status" value="NOT_ANNOTATED_CDS"/>
    <property type="molecule type" value="Genomic_DNA"/>
</dbReference>
<dbReference type="EMBL" id="BC063813">
    <property type="protein sequence ID" value="AAH63813.1"/>
    <property type="molecule type" value="mRNA"/>
</dbReference>
<dbReference type="RefSeq" id="XP_063119832.1">
    <molecule id="Q6P3V7-2"/>
    <property type="nucleotide sequence ID" value="XM_063263762.1"/>
</dbReference>
<dbReference type="STRING" id="10116.ENSRNOP00000036382"/>
<dbReference type="PhosphoSitePlus" id="Q6P3V7"/>
<dbReference type="PaxDb" id="10116-ENSRNOP00000036382"/>
<dbReference type="UCSC" id="RGD:1302940">
    <molecule id="Q6P3V7-1"/>
    <property type="organism name" value="rat"/>
</dbReference>
<dbReference type="AGR" id="RGD:1302940"/>
<dbReference type="RGD" id="1302940">
    <property type="gene designation" value="Ttc41"/>
</dbReference>
<dbReference type="eggNOG" id="ENOG502QUVD">
    <property type="taxonomic scope" value="Eukaryota"/>
</dbReference>
<dbReference type="InParanoid" id="Q6P3V7"/>
<dbReference type="OrthoDB" id="2325716at2759"/>
<dbReference type="PRO" id="PR:Q6P3V7"/>
<dbReference type="Proteomes" id="UP000002494">
    <property type="component" value="Unplaced"/>
</dbReference>
<dbReference type="GO" id="GO:0005829">
    <property type="term" value="C:cytosol"/>
    <property type="evidence" value="ECO:0000266"/>
    <property type="project" value="RGD"/>
</dbReference>
<dbReference type="Gene3D" id="3.40.50.300">
    <property type="entry name" value="P-loop containing nucleotide triphosphate hydrolases"/>
    <property type="match status" value="1"/>
</dbReference>
<dbReference type="Gene3D" id="1.25.40.10">
    <property type="entry name" value="Tetratricopeptide repeat domain"/>
    <property type="match status" value="1"/>
</dbReference>
<dbReference type="InterPro" id="IPR051191">
    <property type="entry name" value="DCAF12"/>
</dbReference>
<dbReference type="InterPro" id="IPR007111">
    <property type="entry name" value="NACHT_NTPase"/>
</dbReference>
<dbReference type="InterPro" id="IPR027417">
    <property type="entry name" value="P-loop_NTPase"/>
</dbReference>
<dbReference type="InterPro" id="IPR011990">
    <property type="entry name" value="TPR-like_helical_dom_sf"/>
</dbReference>
<dbReference type="PANTHER" id="PTHR19860">
    <property type="entry name" value="DDB1- AND CUL4-ASSOCIATED FACTOR 12-RELATED"/>
    <property type="match status" value="1"/>
</dbReference>
<dbReference type="PANTHER" id="PTHR19860:SF18">
    <property type="entry name" value="DUF4062 DOMAIN-CONTAINING PROTEIN"/>
    <property type="match status" value="1"/>
</dbReference>
<dbReference type="Pfam" id="PF05729">
    <property type="entry name" value="NACHT"/>
    <property type="match status" value="1"/>
</dbReference>
<dbReference type="SUPFAM" id="SSF52540">
    <property type="entry name" value="P-loop containing nucleoside triphosphate hydrolases"/>
    <property type="match status" value="1"/>
</dbReference>
<protein>
    <recommendedName>
        <fullName evidence="2">Tetratricopeptide repeat protein 41</fullName>
        <shortName evidence="2">TPR repeat protein 41</shortName>
    </recommendedName>
    <alternativeName>
        <fullName evidence="2">Grp94-neighboring nucleotidase</fullName>
    </alternativeName>
</protein>
<comment type="subcellular location">
    <subcellularLocation>
        <location evidence="1">Cytoplasm</location>
    </subcellularLocation>
</comment>
<comment type="alternative products">
    <event type="alternative splicing"/>
    <isoform>
        <id>Q6P3V7-1</id>
        <name>1</name>
        <sequence type="displayed"/>
    </isoform>
    <isoform>
        <id>Q6P3V7-2</id>
        <name>2</name>
        <sequence type="described" ref="VSP_034502 VSP_034503"/>
    </isoform>
</comment>
<proteinExistence type="evidence at transcript level"/>
<sequence>MIEEAIETAQRYNSQPILKRQKPIRPYICSTIDFQDERDFLAKTIFPQLNDFCSSRGTYFKAVDLRWSALKAHKSFTNNQFRQYSCLHSQHLKLCLDYVNRCFPFFICLLGQTYGDFLPDYTPFLLSKVKDLESLSKGEQNLYVAAKNGYPWVLKTPNCSLTEFEIIQAAFRKKSQFQFFYFRTSNSLLRTFSEEEEEEEEKLSSGYQVDRQGKVKVGKLKAKIIGKGLPVRFYRDLDELGDMVLKDWSAVVEELYPVTMIMENIDYKHSFENLYHEEFVENCKQVFVISKESNRTFEMLERFAIKDLELNSDSTVAGAGLDSILRINSLPTCKSILLLCGERGCGKSTLIANWVDDFKSRHPGVLMVPYFVGSTCESCDIMSVMHYFIMELQHRANGPQLEMDFLNEDSNVLVFSLLIEVFMAAISLKPCILVLDGIEELVGIYGISGQKAKDFSWLPRSLPPHCKFILSSVSSSLSCKSLCARPDVKTVELNSLGDEDTKFSIFRQHLSAPDQERFGQSKPILRKKPNLNPLKLTLIASELQECRIYRNEFQCLREYLEVASVQELWELILKRWVEDYSWPLKHKETTVDNVISGACGWVVDVLCLLCISHCGLAEDELLQILDMMGYRDHHKVTAVHWAAFRNATKNWIQEKPNGLLYFQHQSLRNAVEHKMLGVTISVRESNPNVSQNSTNHKKVHFHQVLMKYFQRQTIFWRVYQELPWHMKMSGYWEGLCGFITSPIITDFISKIQNPSLWTRLHLVHYWDVLLEAGSDVLEAFLLSAAKIEAEDSQKLKKRTTLSGMTVCPEALQATKFLTFLLFLWGFLTLLGNRRANNLFSGAAPFLVSVQSPSMTEMLLKAQNAIGELYLDIGMMQKGLTYFQKAWSNLLRFTLSDLKISQELMKQKVKVMNNLAKSASEEFLKENHVLEYATEVSKYVMDNPRDQATMRYTEGVLIPVGRVFALQGHSYSLLPILRRALGDRLSNKCMSYFSSAVLMEFLFSRSQRKQAIEYYKQVIKIKEKADSVATCKLVRKQLNISLSDTLCKLAGQLLSGDFCHHATMEAVSYLYRSLDLRAAHLGPSHASIEGILHLLREIQRSRGRRSWPQGMNQLYPEGSSCGFSLWENLPKLNFHSAQSSDTVNTAMCMNIHRFQRAKSTEPSLVSDKAKYFPGRGKKTLTPILSMSAEEKAQNSQIRNSLRKQPPRKKGVYPLKTYSLIDKNGSVRLSRQRVFSAELGSGRSLINSIYRQPLRAPLSADNPWKSISELVSEKWLFHTPHYCFTPQKSVFPRRSQIETKMLKTSHDFDKE</sequence>
<gene>
    <name evidence="2" type="primary">Ttc41</name>
    <name evidence="2" type="synonym">Gnn</name>
</gene>